<name>RS4B_CLOP1</name>
<sequence length="197" mass="22992">MAKMMGPRFKMCRRLGLNVVGHPKAMKRADRGTSRADKKLSDYGIQLLEKQRLRAYYGVMERQFTRYVDQAFNSKEQPGEALLMILESRLDNMVYRMGFASSIRQARQMVNHGHFLVNGKKVNIPSFRLNIGDEVVLREKSRKTEMFVNNFKDSIGSEVPYVSKEEDNFKGIFTRKPKREEIPITIQEQLIVEFYSK</sequence>
<keyword id="KW-0687">Ribonucleoprotein</keyword>
<keyword id="KW-0689">Ribosomal protein</keyword>
<keyword id="KW-0694">RNA-binding</keyword>
<keyword id="KW-0699">rRNA-binding</keyword>
<organism>
    <name type="scientific">Clostridium perfringens (strain ATCC 13124 / DSM 756 / JCM 1290 / NCIMB 6125 / NCTC 8237 / Type A)</name>
    <dbReference type="NCBI Taxonomy" id="195103"/>
    <lineage>
        <taxon>Bacteria</taxon>
        <taxon>Bacillati</taxon>
        <taxon>Bacillota</taxon>
        <taxon>Clostridia</taxon>
        <taxon>Eubacteriales</taxon>
        <taxon>Clostridiaceae</taxon>
        <taxon>Clostridium</taxon>
    </lineage>
</organism>
<comment type="function">
    <text evidence="1">One of the primary rRNA binding proteins, it binds directly to 16S rRNA where it nucleates assembly of the body of the 30S subunit.</text>
</comment>
<comment type="function">
    <text evidence="1">With S5 and S12 plays an important role in translational accuracy.</text>
</comment>
<comment type="subunit">
    <text evidence="1">Part of the 30S ribosomal subunit. Contacts protein S5. The interaction surface between S4 and S5 is involved in control of translational fidelity.</text>
</comment>
<comment type="similarity">
    <text evidence="1">Belongs to the universal ribosomal protein uS4 family.</text>
</comment>
<feature type="chain" id="PRO_0000293263" description="Small ribosomal subunit protein uS4B">
    <location>
        <begin position="1"/>
        <end position="197"/>
    </location>
</feature>
<feature type="domain" description="S4 RNA-binding" evidence="1">
    <location>
        <begin position="88"/>
        <end position="150"/>
    </location>
</feature>
<accession>Q0TMU2</accession>
<evidence type="ECO:0000255" key="1">
    <source>
        <dbReference type="HAMAP-Rule" id="MF_01306"/>
    </source>
</evidence>
<evidence type="ECO:0000305" key="2"/>
<proteinExistence type="inferred from homology"/>
<protein>
    <recommendedName>
        <fullName evidence="1">Small ribosomal subunit protein uS4B</fullName>
    </recommendedName>
    <alternativeName>
        <fullName evidence="2">30S ribosomal protein S4 2</fullName>
    </alternativeName>
</protein>
<dbReference type="EMBL" id="CP000246">
    <property type="protein sequence ID" value="ABG85047.1"/>
    <property type="molecule type" value="Genomic_DNA"/>
</dbReference>
<dbReference type="SMR" id="Q0TMU2"/>
<dbReference type="STRING" id="195103.CPF_2668"/>
<dbReference type="PaxDb" id="195103-CPF_2668"/>
<dbReference type="KEGG" id="cpf:CPF_2668"/>
<dbReference type="eggNOG" id="COG0522">
    <property type="taxonomic scope" value="Bacteria"/>
</dbReference>
<dbReference type="HOGENOM" id="CLU_092403_0_1_9"/>
<dbReference type="Proteomes" id="UP000001823">
    <property type="component" value="Chromosome"/>
</dbReference>
<dbReference type="GO" id="GO:0015935">
    <property type="term" value="C:small ribosomal subunit"/>
    <property type="evidence" value="ECO:0007669"/>
    <property type="project" value="InterPro"/>
</dbReference>
<dbReference type="GO" id="GO:0019843">
    <property type="term" value="F:rRNA binding"/>
    <property type="evidence" value="ECO:0007669"/>
    <property type="project" value="UniProtKB-UniRule"/>
</dbReference>
<dbReference type="GO" id="GO:0003735">
    <property type="term" value="F:structural constituent of ribosome"/>
    <property type="evidence" value="ECO:0007669"/>
    <property type="project" value="InterPro"/>
</dbReference>
<dbReference type="GO" id="GO:0042274">
    <property type="term" value="P:ribosomal small subunit biogenesis"/>
    <property type="evidence" value="ECO:0007669"/>
    <property type="project" value="TreeGrafter"/>
</dbReference>
<dbReference type="GO" id="GO:0006412">
    <property type="term" value="P:translation"/>
    <property type="evidence" value="ECO:0007669"/>
    <property type="project" value="UniProtKB-UniRule"/>
</dbReference>
<dbReference type="CDD" id="cd00165">
    <property type="entry name" value="S4"/>
    <property type="match status" value="1"/>
</dbReference>
<dbReference type="FunFam" id="3.10.290.10:FF:000001">
    <property type="entry name" value="30S ribosomal protein S4"/>
    <property type="match status" value="1"/>
</dbReference>
<dbReference type="Gene3D" id="1.10.1050.10">
    <property type="entry name" value="Ribosomal Protein S4 Delta 41, Chain A, domain 1"/>
    <property type="match status" value="1"/>
</dbReference>
<dbReference type="Gene3D" id="3.10.290.10">
    <property type="entry name" value="RNA-binding S4 domain"/>
    <property type="match status" value="1"/>
</dbReference>
<dbReference type="HAMAP" id="MF_01306_B">
    <property type="entry name" value="Ribosomal_uS4_B"/>
    <property type="match status" value="1"/>
</dbReference>
<dbReference type="InterPro" id="IPR022801">
    <property type="entry name" value="Ribosomal_uS4"/>
</dbReference>
<dbReference type="InterPro" id="IPR005709">
    <property type="entry name" value="Ribosomal_uS4_bac-type"/>
</dbReference>
<dbReference type="InterPro" id="IPR018079">
    <property type="entry name" value="Ribosomal_uS4_CS"/>
</dbReference>
<dbReference type="InterPro" id="IPR001912">
    <property type="entry name" value="Ribosomal_uS4_N"/>
</dbReference>
<dbReference type="InterPro" id="IPR002942">
    <property type="entry name" value="S4_RNA-bd"/>
</dbReference>
<dbReference type="InterPro" id="IPR036986">
    <property type="entry name" value="S4_RNA-bd_sf"/>
</dbReference>
<dbReference type="NCBIfam" id="NF003717">
    <property type="entry name" value="PRK05327.1"/>
    <property type="match status" value="1"/>
</dbReference>
<dbReference type="NCBIfam" id="TIGR01017">
    <property type="entry name" value="rpsD_bact"/>
    <property type="match status" value="1"/>
</dbReference>
<dbReference type="PANTHER" id="PTHR11831">
    <property type="entry name" value="30S 40S RIBOSOMAL PROTEIN"/>
    <property type="match status" value="1"/>
</dbReference>
<dbReference type="PANTHER" id="PTHR11831:SF4">
    <property type="entry name" value="SMALL RIBOSOMAL SUBUNIT PROTEIN US4M"/>
    <property type="match status" value="1"/>
</dbReference>
<dbReference type="Pfam" id="PF00163">
    <property type="entry name" value="Ribosomal_S4"/>
    <property type="match status" value="1"/>
</dbReference>
<dbReference type="Pfam" id="PF01479">
    <property type="entry name" value="S4"/>
    <property type="match status" value="1"/>
</dbReference>
<dbReference type="SMART" id="SM01390">
    <property type="entry name" value="Ribosomal_S4"/>
    <property type="match status" value="1"/>
</dbReference>
<dbReference type="SMART" id="SM00363">
    <property type="entry name" value="S4"/>
    <property type="match status" value="1"/>
</dbReference>
<dbReference type="SUPFAM" id="SSF55174">
    <property type="entry name" value="Alpha-L RNA-binding motif"/>
    <property type="match status" value="1"/>
</dbReference>
<dbReference type="PROSITE" id="PS00632">
    <property type="entry name" value="RIBOSOMAL_S4"/>
    <property type="match status" value="1"/>
</dbReference>
<dbReference type="PROSITE" id="PS50889">
    <property type="entry name" value="S4"/>
    <property type="match status" value="1"/>
</dbReference>
<reference key="1">
    <citation type="journal article" date="2006" name="Genome Res.">
        <title>Skewed genomic variability in strains of the toxigenic bacterial pathogen, Clostridium perfringens.</title>
        <authorList>
            <person name="Myers G.S.A."/>
            <person name="Rasko D.A."/>
            <person name="Cheung J.K."/>
            <person name="Ravel J."/>
            <person name="Seshadri R."/>
            <person name="DeBoy R.T."/>
            <person name="Ren Q."/>
            <person name="Varga J."/>
            <person name="Awad M.M."/>
            <person name="Brinkac L.M."/>
            <person name="Daugherty S.C."/>
            <person name="Haft D.H."/>
            <person name="Dodson R.J."/>
            <person name="Madupu R."/>
            <person name="Nelson W.C."/>
            <person name="Rosovitz M.J."/>
            <person name="Sullivan S.A."/>
            <person name="Khouri H."/>
            <person name="Dimitrov G.I."/>
            <person name="Watkins K.L."/>
            <person name="Mulligan S."/>
            <person name="Benton J."/>
            <person name="Radune D."/>
            <person name="Fisher D.J."/>
            <person name="Atkins H.S."/>
            <person name="Hiscox T."/>
            <person name="Jost B.H."/>
            <person name="Billington S.J."/>
            <person name="Songer J.G."/>
            <person name="McClane B.A."/>
            <person name="Titball R.W."/>
            <person name="Rood J.I."/>
            <person name="Melville S.B."/>
            <person name="Paulsen I.T."/>
        </authorList>
    </citation>
    <scope>NUCLEOTIDE SEQUENCE [LARGE SCALE GENOMIC DNA]</scope>
    <source>
        <strain>ATCC 13124 / DSM 756 / JCM 1290 / NCIMB 6125 / NCTC 8237 / S 107 / Type A</strain>
    </source>
</reference>
<gene>
    <name evidence="1" type="primary">rpsD2</name>
    <name type="ordered locus">CPF_2668</name>
</gene>